<organism>
    <name type="scientific">Pyrococcus furiosus (strain ATCC 43587 / DSM 3638 / JCM 8422 / Vc1)</name>
    <dbReference type="NCBI Taxonomy" id="186497"/>
    <lineage>
        <taxon>Archaea</taxon>
        <taxon>Methanobacteriati</taxon>
        <taxon>Methanobacteriota</taxon>
        <taxon>Thermococci</taxon>
        <taxon>Thermococcales</taxon>
        <taxon>Thermococcaceae</taxon>
        <taxon>Pyrococcus</taxon>
    </lineage>
</organism>
<protein>
    <recommendedName>
        <fullName evidence="1">UPF0215 protein PF2042</fullName>
    </recommendedName>
</protein>
<sequence>MIRRVKREIRVIGFDDGTFPHKKRGEKVILVGIVMKGGSDVLGAVSRWITIDGLDVTEAIIDSILSSRFRGDLRVILLKGITYAGFNVVDVNRVFRETGLPLIVVVRKRPDFEAIENALRKHFEDWEKRMELIKAGGKIYELIPGKVYYQAIGIDAETAAKIIRATSRNSLIPEALRIAHIVASAVMRGESSKE</sequence>
<evidence type="ECO:0000255" key="1">
    <source>
        <dbReference type="HAMAP-Rule" id="MF_00582"/>
    </source>
</evidence>
<keyword id="KW-1185">Reference proteome</keyword>
<proteinExistence type="inferred from homology"/>
<accession>Q8TZF3</accession>
<dbReference type="EMBL" id="AE009950">
    <property type="protein sequence ID" value="AAL82166.1"/>
    <property type="molecule type" value="Genomic_DNA"/>
</dbReference>
<dbReference type="RefSeq" id="WP_011013186.1">
    <property type="nucleotide sequence ID" value="NZ_CP023154.1"/>
</dbReference>
<dbReference type="SMR" id="Q8TZF3"/>
<dbReference type="STRING" id="186497.PF2042"/>
<dbReference type="PaxDb" id="186497-PF2042"/>
<dbReference type="KEGG" id="pfu:PF2042"/>
<dbReference type="PATRIC" id="fig|186497.12.peg.2119"/>
<dbReference type="eggNOG" id="arCOG00928">
    <property type="taxonomic scope" value="Archaea"/>
</dbReference>
<dbReference type="HOGENOM" id="CLU_095956_1_0_2"/>
<dbReference type="OrthoDB" id="15207at2157"/>
<dbReference type="PhylomeDB" id="Q8TZF3"/>
<dbReference type="Proteomes" id="UP000001013">
    <property type="component" value="Chromosome"/>
</dbReference>
<dbReference type="Gene3D" id="3.30.2170.10">
    <property type="entry name" value="archaeoglobus fulgidus dsm 4304 superfamily"/>
    <property type="match status" value="1"/>
</dbReference>
<dbReference type="HAMAP" id="MF_00582">
    <property type="entry name" value="UPF0215"/>
    <property type="match status" value="1"/>
</dbReference>
<dbReference type="InterPro" id="IPR002802">
    <property type="entry name" value="Endo_dU"/>
</dbReference>
<dbReference type="NCBIfam" id="NF001977">
    <property type="entry name" value="PRK00766.1"/>
    <property type="match status" value="1"/>
</dbReference>
<dbReference type="PANTHER" id="PTHR39518">
    <property type="entry name" value="UPF0215 PROTEIN MJ1150"/>
    <property type="match status" value="1"/>
</dbReference>
<dbReference type="PANTHER" id="PTHR39518:SF2">
    <property type="entry name" value="UPF0215 PROTEIN MJ1150"/>
    <property type="match status" value="1"/>
</dbReference>
<dbReference type="Pfam" id="PF01949">
    <property type="entry name" value="DUF99"/>
    <property type="match status" value="1"/>
</dbReference>
<dbReference type="PIRSF" id="PIRSF006380">
    <property type="entry name" value="UCP006380"/>
    <property type="match status" value="1"/>
</dbReference>
<reference key="1">
    <citation type="journal article" date="1999" name="Genetics">
        <title>Divergence of the hyperthermophilic archaea Pyrococcus furiosus and P. horikoshii inferred from complete genomic sequences.</title>
        <authorList>
            <person name="Maeder D.L."/>
            <person name="Weiss R.B."/>
            <person name="Dunn D.M."/>
            <person name="Cherry J.L."/>
            <person name="Gonzalez J.M."/>
            <person name="DiRuggiero J."/>
            <person name="Robb F.T."/>
        </authorList>
    </citation>
    <scope>NUCLEOTIDE SEQUENCE [LARGE SCALE GENOMIC DNA]</scope>
    <source>
        <strain>ATCC 43587 / DSM 3638 / JCM 8422 / Vc1</strain>
    </source>
</reference>
<comment type="similarity">
    <text evidence="1">Belongs to the UPF0215 family.</text>
</comment>
<feature type="chain" id="PRO_0000149241" description="UPF0215 protein PF2042">
    <location>
        <begin position="1"/>
        <end position="194"/>
    </location>
</feature>
<name>Y2042_PYRFU</name>
<gene>
    <name type="ordered locus">PF2042</name>
</gene>